<reference key="1">
    <citation type="journal article" date="2005" name="Nucleic Acids Res.">
        <title>The genome sequence of Salmonella enterica serovar Choleraesuis, a highly invasive and resistant zoonotic pathogen.</title>
        <authorList>
            <person name="Chiu C.-H."/>
            <person name="Tang P."/>
            <person name="Chu C."/>
            <person name="Hu S."/>
            <person name="Bao Q."/>
            <person name="Yu J."/>
            <person name="Chou Y.-Y."/>
            <person name="Wang H.-S."/>
            <person name="Lee Y.-S."/>
        </authorList>
    </citation>
    <scope>NUCLEOTIDE SEQUENCE [LARGE SCALE GENOMIC DNA]</scope>
    <source>
        <strain>SC-B67</strain>
    </source>
</reference>
<keyword id="KW-0963">Cytoplasm</keyword>
<keyword id="KW-0342">GTP-binding</keyword>
<keyword id="KW-0378">Hydrolase</keyword>
<keyword id="KW-0460">Magnesium</keyword>
<keyword id="KW-0479">Metal-binding</keyword>
<keyword id="KW-0547">Nucleotide-binding</keyword>
<keyword id="KW-0630">Potassium</keyword>
<keyword id="KW-0819">tRNA processing</keyword>
<feature type="chain" id="PRO_1000048870" description="tRNA modification GTPase MnmE">
    <location>
        <begin position="1"/>
        <end position="454"/>
    </location>
</feature>
<feature type="domain" description="TrmE-type G">
    <location>
        <begin position="216"/>
        <end position="377"/>
    </location>
</feature>
<feature type="binding site" evidence="1">
    <location>
        <position position="23"/>
    </location>
    <ligand>
        <name>(6S)-5-formyl-5,6,7,8-tetrahydrofolate</name>
        <dbReference type="ChEBI" id="CHEBI:57457"/>
    </ligand>
</feature>
<feature type="binding site" evidence="1">
    <location>
        <position position="80"/>
    </location>
    <ligand>
        <name>(6S)-5-formyl-5,6,7,8-tetrahydrofolate</name>
        <dbReference type="ChEBI" id="CHEBI:57457"/>
    </ligand>
</feature>
<feature type="binding site" evidence="1">
    <location>
        <position position="120"/>
    </location>
    <ligand>
        <name>(6S)-5-formyl-5,6,7,8-tetrahydrofolate</name>
        <dbReference type="ChEBI" id="CHEBI:57457"/>
    </ligand>
</feature>
<feature type="binding site" evidence="1">
    <location>
        <begin position="226"/>
        <end position="231"/>
    </location>
    <ligand>
        <name>GTP</name>
        <dbReference type="ChEBI" id="CHEBI:37565"/>
    </ligand>
</feature>
<feature type="binding site" evidence="1">
    <location>
        <position position="226"/>
    </location>
    <ligand>
        <name>K(+)</name>
        <dbReference type="ChEBI" id="CHEBI:29103"/>
    </ligand>
</feature>
<feature type="binding site" evidence="1">
    <location>
        <position position="230"/>
    </location>
    <ligand>
        <name>Mg(2+)</name>
        <dbReference type="ChEBI" id="CHEBI:18420"/>
    </ligand>
</feature>
<feature type="binding site" evidence="1">
    <location>
        <begin position="245"/>
        <end position="251"/>
    </location>
    <ligand>
        <name>GTP</name>
        <dbReference type="ChEBI" id="CHEBI:37565"/>
    </ligand>
</feature>
<feature type="binding site" evidence="1">
    <location>
        <position position="245"/>
    </location>
    <ligand>
        <name>K(+)</name>
        <dbReference type="ChEBI" id="CHEBI:29103"/>
    </ligand>
</feature>
<feature type="binding site" evidence="1">
    <location>
        <position position="247"/>
    </location>
    <ligand>
        <name>K(+)</name>
        <dbReference type="ChEBI" id="CHEBI:29103"/>
    </ligand>
</feature>
<feature type="binding site" evidence="1">
    <location>
        <position position="250"/>
    </location>
    <ligand>
        <name>K(+)</name>
        <dbReference type="ChEBI" id="CHEBI:29103"/>
    </ligand>
</feature>
<feature type="binding site" evidence="1">
    <location>
        <position position="251"/>
    </location>
    <ligand>
        <name>Mg(2+)</name>
        <dbReference type="ChEBI" id="CHEBI:18420"/>
    </ligand>
</feature>
<feature type="binding site" evidence="1">
    <location>
        <begin position="270"/>
        <end position="273"/>
    </location>
    <ligand>
        <name>GTP</name>
        <dbReference type="ChEBI" id="CHEBI:37565"/>
    </ligand>
</feature>
<feature type="binding site" evidence="1">
    <location>
        <begin position="335"/>
        <end position="338"/>
    </location>
    <ligand>
        <name>GTP</name>
        <dbReference type="ChEBI" id="CHEBI:37565"/>
    </ligand>
</feature>
<feature type="binding site" evidence="1">
    <location>
        <begin position="358"/>
        <end position="360"/>
    </location>
    <ligand>
        <name>GTP</name>
        <dbReference type="ChEBI" id="CHEBI:37565"/>
    </ligand>
</feature>
<feature type="binding site" evidence="1">
    <location>
        <position position="454"/>
    </location>
    <ligand>
        <name>(6S)-5-formyl-5,6,7,8-tetrahydrofolate</name>
        <dbReference type="ChEBI" id="CHEBI:57457"/>
    </ligand>
</feature>
<gene>
    <name evidence="1" type="primary">mnmE</name>
    <name evidence="1" type="synonym">trmE</name>
    <name type="ordered locus">SCH_3760</name>
</gene>
<evidence type="ECO:0000255" key="1">
    <source>
        <dbReference type="HAMAP-Rule" id="MF_00379"/>
    </source>
</evidence>
<sequence length="454" mass="49092">MSHNDTIVAQATPPGRGGVGILRISGLKARDVAQEVLGKLPKPRYADYLPFKDVDGSALDQGIALWFPGPNSFTGEDVLELQGHGGPVILDLLLKRILTLPGVRIARPGEFSERAFLNDKLDLAQAEAIADLIDASSEQAARSALNSLQGAFSARVNHLVEALTHLRIYVEAAIDFPDEEIDFLSDGKIEAQLNGVIADLDAVRTEARQGSLLREGMKVVIAGRPNAGKSSLLNALAGREAAIVTDIAGTTRDVLREHIHIDGMPLHIIDTAGLRDASDEVERIGIERAWQEIEQADRVLFMVDGTTTDAVDPADIWPDFIARLPKNLPITVVRNKADITGETLGISEVNGHSLVRLSARTGEGVDVLRNHLKQSMGFDTNMEGGFLARRRHLQALAEAAEHLEQGKAQLLGAWAGELLAEELRLAQQSLSEITGEFTSDDLLGRIFSSFCIGK</sequence>
<comment type="function">
    <text evidence="1">Exhibits a very high intrinsic GTPase hydrolysis rate. Involved in the addition of a carboxymethylaminomethyl (cmnm) group at the wobble position (U34) of certain tRNAs, forming tRNA-cmnm(5)s(2)U34.</text>
</comment>
<comment type="cofactor">
    <cofactor evidence="1">
        <name>K(+)</name>
        <dbReference type="ChEBI" id="CHEBI:29103"/>
    </cofactor>
    <text evidence="1">Binds 1 potassium ion per subunit.</text>
</comment>
<comment type="subunit">
    <text evidence="1">Homodimer. Heterotetramer of two MnmE and two MnmG subunits.</text>
</comment>
<comment type="subcellular location">
    <subcellularLocation>
        <location evidence="1">Cytoplasm</location>
    </subcellularLocation>
</comment>
<comment type="similarity">
    <text evidence="1">Belongs to the TRAFAC class TrmE-Era-EngA-EngB-Septin-like GTPase superfamily. TrmE GTPase family.</text>
</comment>
<dbReference type="EC" id="3.6.-.-" evidence="1"/>
<dbReference type="EMBL" id="AE017220">
    <property type="protein sequence ID" value="AAX67666.1"/>
    <property type="molecule type" value="Genomic_DNA"/>
</dbReference>
<dbReference type="RefSeq" id="WP_000019081.1">
    <property type="nucleotide sequence ID" value="NC_006905.1"/>
</dbReference>
<dbReference type="SMR" id="Q57HZ6"/>
<dbReference type="KEGG" id="sec:SCH_3760"/>
<dbReference type="HOGENOM" id="CLU_019624_4_1_6"/>
<dbReference type="Proteomes" id="UP000000538">
    <property type="component" value="Chromosome"/>
</dbReference>
<dbReference type="GO" id="GO:0005829">
    <property type="term" value="C:cytosol"/>
    <property type="evidence" value="ECO:0007669"/>
    <property type="project" value="TreeGrafter"/>
</dbReference>
<dbReference type="GO" id="GO:0005525">
    <property type="term" value="F:GTP binding"/>
    <property type="evidence" value="ECO:0007669"/>
    <property type="project" value="UniProtKB-UniRule"/>
</dbReference>
<dbReference type="GO" id="GO:0003924">
    <property type="term" value="F:GTPase activity"/>
    <property type="evidence" value="ECO:0007669"/>
    <property type="project" value="UniProtKB-UniRule"/>
</dbReference>
<dbReference type="GO" id="GO:0046872">
    <property type="term" value="F:metal ion binding"/>
    <property type="evidence" value="ECO:0007669"/>
    <property type="project" value="UniProtKB-KW"/>
</dbReference>
<dbReference type="GO" id="GO:0030488">
    <property type="term" value="P:tRNA methylation"/>
    <property type="evidence" value="ECO:0007669"/>
    <property type="project" value="TreeGrafter"/>
</dbReference>
<dbReference type="GO" id="GO:0002098">
    <property type="term" value="P:tRNA wobble uridine modification"/>
    <property type="evidence" value="ECO:0007669"/>
    <property type="project" value="TreeGrafter"/>
</dbReference>
<dbReference type="CDD" id="cd04164">
    <property type="entry name" value="trmE"/>
    <property type="match status" value="1"/>
</dbReference>
<dbReference type="CDD" id="cd14858">
    <property type="entry name" value="TrmE_N"/>
    <property type="match status" value="1"/>
</dbReference>
<dbReference type="FunFam" id="3.30.1360.120:FF:000001">
    <property type="entry name" value="tRNA modification GTPase MnmE"/>
    <property type="match status" value="1"/>
</dbReference>
<dbReference type="FunFam" id="3.40.50.300:FF:000249">
    <property type="entry name" value="tRNA modification GTPase MnmE"/>
    <property type="match status" value="1"/>
</dbReference>
<dbReference type="Gene3D" id="3.40.50.300">
    <property type="entry name" value="P-loop containing nucleotide triphosphate hydrolases"/>
    <property type="match status" value="1"/>
</dbReference>
<dbReference type="Gene3D" id="3.30.1360.120">
    <property type="entry name" value="Probable tRNA modification gtpase trme, domain 1"/>
    <property type="match status" value="1"/>
</dbReference>
<dbReference type="Gene3D" id="1.20.120.430">
    <property type="entry name" value="tRNA modification GTPase MnmE domain 2"/>
    <property type="match status" value="1"/>
</dbReference>
<dbReference type="HAMAP" id="MF_00379">
    <property type="entry name" value="GTPase_MnmE"/>
    <property type="match status" value="1"/>
</dbReference>
<dbReference type="InterPro" id="IPR031168">
    <property type="entry name" value="G_TrmE"/>
</dbReference>
<dbReference type="InterPro" id="IPR006073">
    <property type="entry name" value="GTP-bd"/>
</dbReference>
<dbReference type="InterPro" id="IPR018948">
    <property type="entry name" value="GTP-bd_TrmE_N"/>
</dbReference>
<dbReference type="InterPro" id="IPR004520">
    <property type="entry name" value="GTPase_MnmE"/>
</dbReference>
<dbReference type="InterPro" id="IPR027368">
    <property type="entry name" value="MnmE_dom2"/>
</dbReference>
<dbReference type="InterPro" id="IPR025867">
    <property type="entry name" value="MnmE_helical"/>
</dbReference>
<dbReference type="InterPro" id="IPR027417">
    <property type="entry name" value="P-loop_NTPase"/>
</dbReference>
<dbReference type="InterPro" id="IPR005225">
    <property type="entry name" value="Small_GTP-bd"/>
</dbReference>
<dbReference type="InterPro" id="IPR027266">
    <property type="entry name" value="TrmE/GcvT_dom1"/>
</dbReference>
<dbReference type="NCBIfam" id="TIGR00450">
    <property type="entry name" value="mnmE_trmE_thdF"/>
    <property type="match status" value="1"/>
</dbReference>
<dbReference type="NCBIfam" id="NF003661">
    <property type="entry name" value="PRK05291.1-3"/>
    <property type="match status" value="1"/>
</dbReference>
<dbReference type="NCBIfam" id="TIGR00231">
    <property type="entry name" value="small_GTP"/>
    <property type="match status" value="1"/>
</dbReference>
<dbReference type="PANTHER" id="PTHR42714">
    <property type="entry name" value="TRNA MODIFICATION GTPASE GTPBP3"/>
    <property type="match status" value="1"/>
</dbReference>
<dbReference type="PANTHER" id="PTHR42714:SF2">
    <property type="entry name" value="TRNA MODIFICATION GTPASE GTPBP3, MITOCHONDRIAL"/>
    <property type="match status" value="1"/>
</dbReference>
<dbReference type="Pfam" id="PF01926">
    <property type="entry name" value="MMR_HSR1"/>
    <property type="match status" value="1"/>
</dbReference>
<dbReference type="Pfam" id="PF12631">
    <property type="entry name" value="MnmE_helical"/>
    <property type="match status" value="1"/>
</dbReference>
<dbReference type="Pfam" id="PF10396">
    <property type="entry name" value="TrmE_N"/>
    <property type="match status" value="1"/>
</dbReference>
<dbReference type="SUPFAM" id="SSF52540">
    <property type="entry name" value="P-loop containing nucleoside triphosphate hydrolases"/>
    <property type="match status" value="1"/>
</dbReference>
<dbReference type="SUPFAM" id="SSF116878">
    <property type="entry name" value="TrmE connector domain"/>
    <property type="match status" value="1"/>
</dbReference>
<dbReference type="PROSITE" id="PS51709">
    <property type="entry name" value="G_TRME"/>
    <property type="match status" value="1"/>
</dbReference>
<protein>
    <recommendedName>
        <fullName evidence="1">tRNA modification GTPase MnmE</fullName>
        <ecNumber evidence="1">3.6.-.-</ecNumber>
    </recommendedName>
</protein>
<accession>Q57HZ6</accession>
<organism>
    <name type="scientific">Salmonella choleraesuis (strain SC-B67)</name>
    <dbReference type="NCBI Taxonomy" id="321314"/>
    <lineage>
        <taxon>Bacteria</taxon>
        <taxon>Pseudomonadati</taxon>
        <taxon>Pseudomonadota</taxon>
        <taxon>Gammaproteobacteria</taxon>
        <taxon>Enterobacterales</taxon>
        <taxon>Enterobacteriaceae</taxon>
        <taxon>Salmonella</taxon>
    </lineage>
</organism>
<proteinExistence type="inferred from homology"/>
<name>MNME_SALCH</name>